<comment type="function">
    <text evidence="1">Endonuclease that specifically degrades the RNA of RNA-DNA hybrids.</text>
</comment>
<comment type="catalytic activity">
    <reaction evidence="1">
        <text>Endonucleolytic cleavage to 5'-phosphomonoester.</text>
        <dbReference type="EC" id="3.1.26.4"/>
    </reaction>
</comment>
<comment type="cofactor">
    <cofactor evidence="1">
        <name>Mn(2+)</name>
        <dbReference type="ChEBI" id="CHEBI:29035"/>
    </cofactor>
    <cofactor evidence="1">
        <name>Mg(2+)</name>
        <dbReference type="ChEBI" id="CHEBI:18420"/>
    </cofactor>
    <text evidence="1">Manganese or magnesium. Binds 1 divalent metal ion per monomer in the absence of substrate. May bind a second metal ion after substrate binding.</text>
</comment>
<comment type="subcellular location">
    <subcellularLocation>
        <location evidence="1">Cytoplasm</location>
    </subcellularLocation>
</comment>
<comment type="similarity">
    <text evidence="1">Belongs to the RNase HII family.</text>
</comment>
<reference key="1">
    <citation type="journal article" date="2010" name="Appl. Environ. Microbiol.">
        <title>Conserved symbiotic plasmid DNA sequences in the multireplicon pangenomic structure of Rhizobium etli.</title>
        <authorList>
            <person name="Gonzalez V."/>
            <person name="Acosta J.L."/>
            <person name="Santamaria R.I."/>
            <person name="Bustos P."/>
            <person name="Fernandez J.L."/>
            <person name="Hernandez Gonzalez I.L."/>
            <person name="Diaz R."/>
            <person name="Flores M."/>
            <person name="Palacios R."/>
            <person name="Mora J."/>
            <person name="Davila G."/>
        </authorList>
    </citation>
    <scope>NUCLEOTIDE SEQUENCE [LARGE SCALE GENOMIC DNA]</scope>
    <source>
        <strain>CIAT 652</strain>
    </source>
</reference>
<name>RNH2_RHIE6</name>
<accession>B3PRG0</accession>
<keyword id="KW-0963">Cytoplasm</keyword>
<keyword id="KW-0255">Endonuclease</keyword>
<keyword id="KW-0378">Hydrolase</keyword>
<keyword id="KW-0464">Manganese</keyword>
<keyword id="KW-0479">Metal-binding</keyword>
<keyword id="KW-0540">Nuclease</keyword>
<evidence type="ECO:0000255" key="1">
    <source>
        <dbReference type="HAMAP-Rule" id="MF_00052"/>
    </source>
</evidence>
<evidence type="ECO:0000255" key="2">
    <source>
        <dbReference type="PROSITE-ProRule" id="PRU01319"/>
    </source>
</evidence>
<evidence type="ECO:0000256" key="3">
    <source>
        <dbReference type="SAM" id="MobiDB-lite"/>
    </source>
</evidence>
<gene>
    <name evidence="1" type="primary">rnhB</name>
    <name type="ordered locus">RHECIAT_CH0000958</name>
</gene>
<proteinExistence type="inferred from homology"/>
<sequence length="229" mass="24512">MKPRTSPDSPLLFDTAPLVPDFRLELKARKAGHWPVAGADEAGRGPLAGPVVAAAVILDPKRIPEGLNDSKQLSAQRREELFVQILATATVSIASSSSTRIDETDIRKASLDAMRRAICSLAVPASYVLTDGLDVPPGLDCPGQAVVKGDARSVSIAAASIVAKVTRDRMMARAHNVFPDYGFAAHAGYGTAQHRTGIEKHGPCSLHRMSFRPLRKSEDGPEMDELIPE</sequence>
<feature type="chain" id="PRO_1000091645" description="Ribonuclease HII">
    <location>
        <begin position="1"/>
        <end position="229"/>
    </location>
</feature>
<feature type="domain" description="RNase H type-2" evidence="2">
    <location>
        <begin position="34"/>
        <end position="223"/>
    </location>
</feature>
<feature type="region of interest" description="Disordered" evidence="3">
    <location>
        <begin position="209"/>
        <end position="229"/>
    </location>
</feature>
<feature type="compositionally biased region" description="Acidic residues" evidence="3">
    <location>
        <begin position="220"/>
        <end position="229"/>
    </location>
</feature>
<feature type="binding site" evidence="1">
    <location>
        <position position="40"/>
    </location>
    <ligand>
        <name>a divalent metal cation</name>
        <dbReference type="ChEBI" id="CHEBI:60240"/>
    </ligand>
</feature>
<feature type="binding site" evidence="1">
    <location>
        <position position="41"/>
    </location>
    <ligand>
        <name>a divalent metal cation</name>
        <dbReference type="ChEBI" id="CHEBI:60240"/>
    </ligand>
</feature>
<feature type="binding site" evidence="1">
    <location>
        <position position="131"/>
    </location>
    <ligand>
        <name>a divalent metal cation</name>
        <dbReference type="ChEBI" id="CHEBI:60240"/>
    </ligand>
</feature>
<dbReference type="EC" id="3.1.26.4" evidence="1"/>
<dbReference type="EMBL" id="CP001074">
    <property type="protein sequence ID" value="ACE89943.1"/>
    <property type="molecule type" value="Genomic_DNA"/>
</dbReference>
<dbReference type="SMR" id="B3PRG0"/>
<dbReference type="KEGG" id="rec:RHECIAT_CH0000958"/>
<dbReference type="eggNOG" id="COG0164">
    <property type="taxonomic scope" value="Bacteria"/>
</dbReference>
<dbReference type="HOGENOM" id="CLU_036532_3_2_5"/>
<dbReference type="Proteomes" id="UP000008817">
    <property type="component" value="Chromosome"/>
</dbReference>
<dbReference type="GO" id="GO:0005737">
    <property type="term" value="C:cytoplasm"/>
    <property type="evidence" value="ECO:0007669"/>
    <property type="project" value="UniProtKB-SubCell"/>
</dbReference>
<dbReference type="GO" id="GO:0032299">
    <property type="term" value="C:ribonuclease H2 complex"/>
    <property type="evidence" value="ECO:0007669"/>
    <property type="project" value="TreeGrafter"/>
</dbReference>
<dbReference type="GO" id="GO:0030145">
    <property type="term" value="F:manganese ion binding"/>
    <property type="evidence" value="ECO:0007669"/>
    <property type="project" value="UniProtKB-UniRule"/>
</dbReference>
<dbReference type="GO" id="GO:0003723">
    <property type="term" value="F:RNA binding"/>
    <property type="evidence" value="ECO:0007669"/>
    <property type="project" value="InterPro"/>
</dbReference>
<dbReference type="GO" id="GO:0004523">
    <property type="term" value="F:RNA-DNA hybrid ribonuclease activity"/>
    <property type="evidence" value="ECO:0007669"/>
    <property type="project" value="UniProtKB-UniRule"/>
</dbReference>
<dbReference type="GO" id="GO:0043137">
    <property type="term" value="P:DNA replication, removal of RNA primer"/>
    <property type="evidence" value="ECO:0007669"/>
    <property type="project" value="TreeGrafter"/>
</dbReference>
<dbReference type="GO" id="GO:0006298">
    <property type="term" value="P:mismatch repair"/>
    <property type="evidence" value="ECO:0007669"/>
    <property type="project" value="TreeGrafter"/>
</dbReference>
<dbReference type="CDD" id="cd07182">
    <property type="entry name" value="RNase_HII_bacteria_HII_like"/>
    <property type="match status" value="1"/>
</dbReference>
<dbReference type="Gene3D" id="3.30.420.10">
    <property type="entry name" value="Ribonuclease H-like superfamily/Ribonuclease H"/>
    <property type="match status" value="1"/>
</dbReference>
<dbReference type="HAMAP" id="MF_00052_B">
    <property type="entry name" value="RNase_HII_B"/>
    <property type="match status" value="1"/>
</dbReference>
<dbReference type="InterPro" id="IPR022898">
    <property type="entry name" value="RNase_HII"/>
</dbReference>
<dbReference type="InterPro" id="IPR001352">
    <property type="entry name" value="RNase_HII/HIII"/>
</dbReference>
<dbReference type="InterPro" id="IPR024567">
    <property type="entry name" value="RNase_HII/HIII_dom"/>
</dbReference>
<dbReference type="InterPro" id="IPR012337">
    <property type="entry name" value="RNaseH-like_sf"/>
</dbReference>
<dbReference type="InterPro" id="IPR036397">
    <property type="entry name" value="RNaseH_sf"/>
</dbReference>
<dbReference type="NCBIfam" id="NF000595">
    <property type="entry name" value="PRK00015.1-3"/>
    <property type="match status" value="1"/>
</dbReference>
<dbReference type="PANTHER" id="PTHR10954">
    <property type="entry name" value="RIBONUCLEASE H2 SUBUNIT A"/>
    <property type="match status" value="1"/>
</dbReference>
<dbReference type="PANTHER" id="PTHR10954:SF18">
    <property type="entry name" value="RIBONUCLEASE HII"/>
    <property type="match status" value="1"/>
</dbReference>
<dbReference type="Pfam" id="PF01351">
    <property type="entry name" value="RNase_HII"/>
    <property type="match status" value="1"/>
</dbReference>
<dbReference type="SUPFAM" id="SSF53098">
    <property type="entry name" value="Ribonuclease H-like"/>
    <property type="match status" value="1"/>
</dbReference>
<dbReference type="PROSITE" id="PS51975">
    <property type="entry name" value="RNASE_H_2"/>
    <property type="match status" value="1"/>
</dbReference>
<organism>
    <name type="scientific">Rhizobium etli (strain CIAT 652)</name>
    <dbReference type="NCBI Taxonomy" id="491916"/>
    <lineage>
        <taxon>Bacteria</taxon>
        <taxon>Pseudomonadati</taxon>
        <taxon>Pseudomonadota</taxon>
        <taxon>Alphaproteobacteria</taxon>
        <taxon>Hyphomicrobiales</taxon>
        <taxon>Rhizobiaceae</taxon>
        <taxon>Rhizobium/Agrobacterium group</taxon>
        <taxon>Rhizobium</taxon>
    </lineage>
</organism>
<protein>
    <recommendedName>
        <fullName evidence="1">Ribonuclease HII</fullName>
        <shortName evidence="1">RNase HII</shortName>
        <ecNumber evidence="1">3.1.26.4</ecNumber>
    </recommendedName>
</protein>